<feature type="chain" id="PRO_0000123873" description="Aspartate aminotransferase, cytoplasmic isozyme 2">
    <location>
        <begin position="1"/>
        <end position="403"/>
    </location>
</feature>
<feature type="binding site" evidence="1">
    <location>
        <position position="37"/>
    </location>
    <ligand>
        <name>L-aspartate</name>
        <dbReference type="ChEBI" id="CHEBI:29991"/>
    </ligand>
</feature>
<feature type="binding site" evidence="1">
    <location>
        <position position="132"/>
    </location>
    <ligand>
        <name>L-aspartate</name>
        <dbReference type="ChEBI" id="CHEBI:29991"/>
    </ligand>
</feature>
<feature type="binding site" evidence="1">
    <location>
        <position position="185"/>
    </location>
    <ligand>
        <name>L-aspartate</name>
        <dbReference type="ChEBI" id="CHEBI:29991"/>
    </ligand>
</feature>
<feature type="binding site" evidence="1">
    <location>
        <position position="377"/>
    </location>
    <ligand>
        <name>L-aspartate</name>
        <dbReference type="ChEBI" id="CHEBI:29991"/>
    </ligand>
</feature>
<feature type="modified residue" description="N-acetylmethionine" evidence="2">
    <location>
        <position position="1"/>
    </location>
</feature>
<feature type="modified residue" description="N6-(pyridoxal phosphate)lysine" evidence="1">
    <location>
        <position position="249"/>
    </location>
</feature>
<feature type="sequence conflict" description="In Ref. 1; AAA79372." evidence="3" ref="1">
    <original>I</original>
    <variation>F</variation>
    <location>
        <position position="199"/>
    </location>
</feature>
<name>AAT4_ARATH</name>
<evidence type="ECO:0000250" key="1"/>
<evidence type="ECO:0000250" key="2">
    <source>
        <dbReference type="UniProtKB" id="P46645"/>
    </source>
</evidence>
<evidence type="ECO:0000305" key="3"/>
<organism>
    <name type="scientific">Arabidopsis thaliana</name>
    <name type="common">Mouse-ear cress</name>
    <dbReference type="NCBI Taxonomy" id="3702"/>
    <lineage>
        <taxon>Eukaryota</taxon>
        <taxon>Viridiplantae</taxon>
        <taxon>Streptophyta</taxon>
        <taxon>Embryophyta</taxon>
        <taxon>Tracheophyta</taxon>
        <taxon>Spermatophyta</taxon>
        <taxon>Magnoliopsida</taxon>
        <taxon>eudicotyledons</taxon>
        <taxon>Gunneridae</taxon>
        <taxon>Pentapetalae</taxon>
        <taxon>rosids</taxon>
        <taxon>malvids</taxon>
        <taxon>Brassicales</taxon>
        <taxon>Brassicaceae</taxon>
        <taxon>Camelineae</taxon>
        <taxon>Arabidopsis</taxon>
    </lineage>
</organism>
<proteinExistence type="evidence at transcript level"/>
<keyword id="KW-0007">Acetylation</keyword>
<keyword id="KW-0025">Alternative splicing</keyword>
<keyword id="KW-0032">Aminotransferase</keyword>
<keyword id="KW-0963">Cytoplasm</keyword>
<keyword id="KW-0663">Pyridoxal phosphate</keyword>
<keyword id="KW-1185">Reference proteome</keyword>
<keyword id="KW-0808">Transferase</keyword>
<dbReference type="EC" id="2.6.1.1"/>
<dbReference type="EMBL" id="U15035">
    <property type="protein sequence ID" value="AAA79372.1"/>
    <property type="molecule type" value="mRNA"/>
</dbReference>
<dbReference type="EMBL" id="AC007190">
    <property type="protein sequence ID" value="AAF19543.1"/>
    <property type="status" value="ALT_SEQ"/>
    <property type="molecule type" value="Genomic_DNA"/>
</dbReference>
<dbReference type="EMBL" id="CP002684">
    <property type="protein sequence ID" value="AEE34006.1"/>
    <property type="molecule type" value="Genomic_DNA"/>
</dbReference>
<dbReference type="PIR" id="H96652">
    <property type="entry name" value="H96652"/>
</dbReference>
<dbReference type="RefSeq" id="NP_564803.1">
    <molecule id="P46646-1"/>
    <property type="nucleotide sequence ID" value="NM_104958.2"/>
</dbReference>
<dbReference type="SMR" id="P46646"/>
<dbReference type="FunCoup" id="P46646">
    <property type="interactions" value="593"/>
</dbReference>
<dbReference type="STRING" id="3702.P46646"/>
<dbReference type="PaxDb" id="3702-AT1G62800.2"/>
<dbReference type="ProteomicsDB" id="245170">
    <molecule id="P46646-1"/>
</dbReference>
<dbReference type="EnsemblPlants" id="AT1G62800.1">
    <molecule id="P46646-1"/>
    <property type="protein sequence ID" value="AT1G62800.1"/>
    <property type="gene ID" value="AT1G62800"/>
</dbReference>
<dbReference type="GeneID" id="842579"/>
<dbReference type="Gramene" id="AT1G62800.1">
    <molecule id="P46646-1"/>
    <property type="protein sequence ID" value="AT1G62800.1"/>
    <property type="gene ID" value="AT1G62800"/>
</dbReference>
<dbReference type="KEGG" id="ath:AT1G62800"/>
<dbReference type="Araport" id="AT1G62800"/>
<dbReference type="TAIR" id="AT1G62800">
    <property type="gene designation" value="ASP4"/>
</dbReference>
<dbReference type="eggNOG" id="KOG1411">
    <property type="taxonomic scope" value="Eukaryota"/>
</dbReference>
<dbReference type="HOGENOM" id="CLU_032440_1_2_1"/>
<dbReference type="InParanoid" id="P46646"/>
<dbReference type="OMA" id="LEFCVAQ"/>
<dbReference type="PhylomeDB" id="P46646"/>
<dbReference type="BioCyc" id="ARA:AT1G62800-MONOMER"/>
<dbReference type="PRO" id="PR:P46646"/>
<dbReference type="Proteomes" id="UP000006548">
    <property type="component" value="Chromosome 1"/>
</dbReference>
<dbReference type="ExpressionAtlas" id="P46646">
    <property type="expression patterns" value="baseline and differential"/>
</dbReference>
<dbReference type="GO" id="GO:0005737">
    <property type="term" value="C:cytoplasm"/>
    <property type="evidence" value="ECO:0007669"/>
    <property type="project" value="UniProtKB-SubCell"/>
</dbReference>
<dbReference type="GO" id="GO:0004069">
    <property type="term" value="F:L-aspartate:2-oxoglutarate aminotransferase activity"/>
    <property type="evidence" value="ECO:0000250"/>
    <property type="project" value="UniProtKB"/>
</dbReference>
<dbReference type="GO" id="GO:0030170">
    <property type="term" value="F:pyridoxal phosphate binding"/>
    <property type="evidence" value="ECO:0007669"/>
    <property type="project" value="InterPro"/>
</dbReference>
<dbReference type="GO" id="GO:0006103">
    <property type="term" value="P:2-oxoglutarate metabolic process"/>
    <property type="evidence" value="ECO:0000250"/>
    <property type="project" value="UniProtKB"/>
</dbReference>
<dbReference type="GO" id="GO:0006531">
    <property type="term" value="P:aspartate metabolic process"/>
    <property type="evidence" value="ECO:0000250"/>
    <property type="project" value="UniProtKB"/>
</dbReference>
<dbReference type="GO" id="GO:0009058">
    <property type="term" value="P:biosynthetic process"/>
    <property type="evidence" value="ECO:0007669"/>
    <property type="project" value="InterPro"/>
</dbReference>
<dbReference type="GO" id="GO:0006536">
    <property type="term" value="P:glutamate metabolic process"/>
    <property type="evidence" value="ECO:0000250"/>
    <property type="project" value="UniProtKB"/>
</dbReference>
<dbReference type="CDD" id="cd00609">
    <property type="entry name" value="AAT_like"/>
    <property type="match status" value="1"/>
</dbReference>
<dbReference type="FunFam" id="3.40.640.10:FF:000052">
    <property type="entry name" value="Aspartate aminotransferase"/>
    <property type="match status" value="1"/>
</dbReference>
<dbReference type="FunFam" id="3.90.1150.10:FF:000001">
    <property type="entry name" value="Aspartate aminotransferase"/>
    <property type="match status" value="1"/>
</dbReference>
<dbReference type="Gene3D" id="3.90.1150.10">
    <property type="entry name" value="Aspartate Aminotransferase, domain 1"/>
    <property type="match status" value="1"/>
</dbReference>
<dbReference type="Gene3D" id="3.40.640.10">
    <property type="entry name" value="Type I PLP-dependent aspartate aminotransferase-like (Major domain)"/>
    <property type="match status" value="1"/>
</dbReference>
<dbReference type="InterPro" id="IPR004839">
    <property type="entry name" value="Aminotransferase_I/II_large"/>
</dbReference>
<dbReference type="InterPro" id="IPR000796">
    <property type="entry name" value="Asp_trans"/>
</dbReference>
<dbReference type="InterPro" id="IPR004838">
    <property type="entry name" value="NHTrfase_class1_PyrdxlP-BS"/>
</dbReference>
<dbReference type="InterPro" id="IPR015424">
    <property type="entry name" value="PyrdxlP-dep_Trfase"/>
</dbReference>
<dbReference type="InterPro" id="IPR015421">
    <property type="entry name" value="PyrdxlP-dep_Trfase_major"/>
</dbReference>
<dbReference type="InterPro" id="IPR015422">
    <property type="entry name" value="PyrdxlP-dep_Trfase_small"/>
</dbReference>
<dbReference type="NCBIfam" id="NF006719">
    <property type="entry name" value="PRK09257.1"/>
    <property type="match status" value="1"/>
</dbReference>
<dbReference type="PANTHER" id="PTHR11879">
    <property type="entry name" value="ASPARTATE AMINOTRANSFERASE"/>
    <property type="match status" value="1"/>
</dbReference>
<dbReference type="PANTHER" id="PTHR11879:SF41">
    <property type="entry name" value="ASPARTATE AMINOTRANSFERASE, CYTOPLASMIC ISOZYME 2"/>
    <property type="match status" value="1"/>
</dbReference>
<dbReference type="Pfam" id="PF00155">
    <property type="entry name" value="Aminotran_1_2"/>
    <property type="match status" value="1"/>
</dbReference>
<dbReference type="PRINTS" id="PR00799">
    <property type="entry name" value="TRANSAMINASE"/>
</dbReference>
<dbReference type="SUPFAM" id="SSF53383">
    <property type="entry name" value="PLP-dependent transferases"/>
    <property type="match status" value="1"/>
</dbReference>
<dbReference type="PROSITE" id="PS00105">
    <property type="entry name" value="AA_TRANSFER_CLASS_1"/>
    <property type="match status" value="1"/>
</dbReference>
<comment type="function">
    <text>Important for the metabolism of amino acids and Krebs-cycle related organic acids. In plants, it is involved in nitrogen metabolism and in aspects of carbon and energy metabolism.</text>
</comment>
<comment type="catalytic activity">
    <reaction>
        <text>L-aspartate + 2-oxoglutarate = oxaloacetate + L-glutamate</text>
        <dbReference type="Rhea" id="RHEA:21824"/>
        <dbReference type="ChEBI" id="CHEBI:16452"/>
        <dbReference type="ChEBI" id="CHEBI:16810"/>
        <dbReference type="ChEBI" id="CHEBI:29985"/>
        <dbReference type="ChEBI" id="CHEBI:29991"/>
        <dbReference type="EC" id="2.6.1.1"/>
    </reaction>
</comment>
<comment type="cofactor">
    <cofactor>
        <name>pyridoxal 5'-phosphate</name>
        <dbReference type="ChEBI" id="CHEBI:597326"/>
    </cofactor>
</comment>
<comment type="subunit">
    <text evidence="1">Homodimer.</text>
</comment>
<comment type="subcellular location">
    <subcellularLocation>
        <location evidence="3">Cytoplasm</location>
    </subcellularLocation>
</comment>
<comment type="alternative products">
    <event type="alternative splicing"/>
    <isoform>
        <id>P46646-1</id>
        <name>1</name>
        <sequence type="displayed"/>
    </isoform>
    <text>A number of isoforms are produced. According to EST sequences.</text>
</comment>
<comment type="miscellaneous">
    <text>In eukaryotes there are cytoplasmic, mitochondrial and chloroplastic isozymes.</text>
</comment>
<comment type="similarity">
    <text evidence="3">Belongs to the class-I pyridoxal-phosphate-dependent aminotransferase family.</text>
</comment>
<comment type="sequence caution" evidence="3">
    <conflict type="erroneous gene model prediction">
        <sequence resource="EMBL-CDS" id="AAF19543"/>
    </conflict>
</comment>
<sequence>MNSILSSVLPAPEDPVLSVIFACRDDPSPVKLNLSAGTYRTEEGKPLVLDVVRRAEQQLANDLDKEYLPLNGLPEFNKLSTKLILGDDSPALKENRVVTTQCLSGTGSLRVGAEFLATHNKESVIFVPNPTWGNHPRIFTLAGLSVQYFRYYDPKSRGLDFKGMLEDLGAAPPGAIVVLQACAHNPTGVDPTFEQWEKIRRLVRSKSLLPFFDSAYQGFASGSLDADAQAVRMFVADGGECLIAQSYAKNMGLYGERIGSLTIVCTSEDVAKKVENQVLLVVRPMYLTPPIHGASIVATILKNSDMYNDWTIELKGMADRIISMRQQLYAALEARGTPGDWSHIIKHIGMFTFTGLSEEQVRLMAKEYHIYMTYDGRISMASLSSKTVPQLADAIHAVVTRIA</sequence>
<accession>P46646</accession>
<accession>Q9SI69</accession>
<reference key="1">
    <citation type="journal article" date="1995" name="Plant J.">
        <title>The aspartate aminotransferase gene family of Arabidopsis encodes isoenzymes localized to three distinct subcellular compartments.</title>
        <authorList>
            <person name="Schultz C.J."/>
            <person name="Coruzzi G.M."/>
        </authorList>
    </citation>
    <scope>NUCLEOTIDE SEQUENCE [MRNA]</scope>
    <source>
        <strain>cv. Columbia</strain>
        <tissue>Leaf</tissue>
    </source>
</reference>
<reference key="2">
    <citation type="journal article" date="2000" name="Nature">
        <title>Sequence and analysis of chromosome 1 of the plant Arabidopsis thaliana.</title>
        <authorList>
            <person name="Theologis A."/>
            <person name="Ecker J.R."/>
            <person name="Palm C.J."/>
            <person name="Federspiel N.A."/>
            <person name="Kaul S."/>
            <person name="White O."/>
            <person name="Alonso J."/>
            <person name="Altafi H."/>
            <person name="Araujo R."/>
            <person name="Bowman C.L."/>
            <person name="Brooks S.Y."/>
            <person name="Buehler E."/>
            <person name="Chan A."/>
            <person name="Chao Q."/>
            <person name="Chen H."/>
            <person name="Cheuk R.F."/>
            <person name="Chin C.W."/>
            <person name="Chung M.K."/>
            <person name="Conn L."/>
            <person name="Conway A.B."/>
            <person name="Conway A.R."/>
            <person name="Creasy T.H."/>
            <person name="Dewar K."/>
            <person name="Dunn P."/>
            <person name="Etgu P."/>
            <person name="Feldblyum T.V."/>
            <person name="Feng J.-D."/>
            <person name="Fong B."/>
            <person name="Fujii C.Y."/>
            <person name="Gill J.E."/>
            <person name="Goldsmith A.D."/>
            <person name="Haas B."/>
            <person name="Hansen N.F."/>
            <person name="Hughes B."/>
            <person name="Huizar L."/>
            <person name="Hunter J.L."/>
            <person name="Jenkins J."/>
            <person name="Johnson-Hopson C."/>
            <person name="Khan S."/>
            <person name="Khaykin E."/>
            <person name="Kim C.J."/>
            <person name="Koo H.L."/>
            <person name="Kremenetskaia I."/>
            <person name="Kurtz D.B."/>
            <person name="Kwan A."/>
            <person name="Lam B."/>
            <person name="Langin-Hooper S."/>
            <person name="Lee A."/>
            <person name="Lee J.M."/>
            <person name="Lenz C.A."/>
            <person name="Li J.H."/>
            <person name="Li Y.-P."/>
            <person name="Lin X."/>
            <person name="Liu S.X."/>
            <person name="Liu Z.A."/>
            <person name="Luros J.S."/>
            <person name="Maiti R."/>
            <person name="Marziali A."/>
            <person name="Militscher J."/>
            <person name="Miranda M."/>
            <person name="Nguyen M."/>
            <person name="Nierman W.C."/>
            <person name="Osborne B.I."/>
            <person name="Pai G."/>
            <person name="Peterson J."/>
            <person name="Pham P.K."/>
            <person name="Rizzo M."/>
            <person name="Rooney T."/>
            <person name="Rowley D."/>
            <person name="Sakano H."/>
            <person name="Salzberg S.L."/>
            <person name="Schwartz J.R."/>
            <person name="Shinn P."/>
            <person name="Southwick A.M."/>
            <person name="Sun H."/>
            <person name="Tallon L.J."/>
            <person name="Tambunga G."/>
            <person name="Toriumi M.J."/>
            <person name="Town C.D."/>
            <person name="Utterback T."/>
            <person name="Van Aken S."/>
            <person name="Vaysberg M."/>
            <person name="Vysotskaia V.S."/>
            <person name="Walker M."/>
            <person name="Wu D."/>
            <person name="Yu G."/>
            <person name="Fraser C.M."/>
            <person name="Venter J.C."/>
            <person name="Davis R.W."/>
        </authorList>
    </citation>
    <scope>NUCLEOTIDE SEQUENCE [LARGE SCALE GENOMIC DNA]</scope>
    <source>
        <strain>cv. Columbia</strain>
    </source>
</reference>
<reference key="3">
    <citation type="journal article" date="2017" name="Plant J.">
        <title>Araport11: a complete reannotation of the Arabidopsis thaliana reference genome.</title>
        <authorList>
            <person name="Cheng C.Y."/>
            <person name="Krishnakumar V."/>
            <person name="Chan A.P."/>
            <person name="Thibaud-Nissen F."/>
            <person name="Schobel S."/>
            <person name="Town C.D."/>
        </authorList>
    </citation>
    <scope>GENOME REANNOTATION</scope>
    <source>
        <strain>cv. Columbia</strain>
    </source>
</reference>
<protein>
    <recommendedName>
        <fullName>Aspartate aminotransferase, cytoplasmic isozyme 2</fullName>
        <ecNumber>2.6.1.1</ecNumber>
    </recommendedName>
    <alternativeName>
        <fullName>Transaminase A</fullName>
    </alternativeName>
</protein>
<gene>
    <name type="primary">ASP4</name>
    <name type="ordered locus">At1g62800</name>
    <name type="ORF">F23N19.17</name>
    <name type="ORF">F23N19_26</name>
</gene>